<evidence type="ECO:0000255" key="1">
    <source>
        <dbReference type="HAMAP-Rule" id="MF_01369"/>
    </source>
</evidence>
<evidence type="ECO:0000305" key="2"/>
<keyword id="KW-0687">Ribonucleoprotein</keyword>
<keyword id="KW-0689">Ribosomal protein</keyword>
<keyword id="KW-0694">RNA-binding</keyword>
<keyword id="KW-0699">rRNA-binding</keyword>
<accession>C1FMU9</accession>
<organism>
    <name type="scientific">Clostridium botulinum (strain Kyoto / Type A2)</name>
    <dbReference type="NCBI Taxonomy" id="536232"/>
    <lineage>
        <taxon>Bacteria</taxon>
        <taxon>Bacillati</taxon>
        <taxon>Bacillota</taxon>
        <taxon>Clostridia</taxon>
        <taxon>Eubacteriales</taxon>
        <taxon>Clostridiaceae</taxon>
        <taxon>Clostridium</taxon>
    </lineage>
</organism>
<gene>
    <name evidence="1" type="primary">rplW</name>
    <name type="ordered locus">CLM_3946</name>
</gene>
<reference key="1">
    <citation type="submission" date="2008-10" db="EMBL/GenBank/DDBJ databases">
        <title>Genome sequence of Clostridium botulinum A2 Kyoto.</title>
        <authorList>
            <person name="Shrivastava S."/>
            <person name="Brinkac L.M."/>
            <person name="Brown J.L."/>
            <person name="Bruce D."/>
            <person name="Detter C.C."/>
            <person name="Johnson E.A."/>
            <person name="Munk C.A."/>
            <person name="Smith L.A."/>
            <person name="Smith T.J."/>
            <person name="Sutton G."/>
            <person name="Brettin T.S."/>
        </authorList>
    </citation>
    <scope>NUCLEOTIDE SEQUENCE [LARGE SCALE GENOMIC DNA]</scope>
    <source>
        <strain>Kyoto / Type A2</strain>
    </source>
</reference>
<feature type="chain" id="PRO_1000184077" description="Large ribosomal subunit protein uL23">
    <location>
        <begin position="1"/>
        <end position="97"/>
    </location>
</feature>
<comment type="function">
    <text evidence="1">One of the early assembly proteins it binds 23S rRNA. One of the proteins that surrounds the polypeptide exit tunnel on the outside of the ribosome. Forms the main docking site for trigger factor binding to the ribosome.</text>
</comment>
<comment type="subunit">
    <text evidence="1">Part of the 50S ribosomal subunit. Contacts protein L29, and trigger factor when it is bound to the ribosome.</text>
</comment>
<comment type="similarity">
    <text evidence="1">Belongs to the universal ribosomal protein uL23 family.</text>
</comment>
<dbReference type="EMBL" id="CP001581">
    <property type="protein sequence ID" value="ACO86163.1"/>
    <property type="molecule type" value="Genomic_DNA"/>
</dbReference>
<dbReference type="RefSeq" id="WP_003357444.1">
    <property type="nucleotide sequence ID" value="NC_012563.1"/>
</dbReference>
<dbReference type="SMR" id="C1FMU9"/>
<dbReference type="GeneID" id="92940248"/>
<dbReference type="KEGG" id="cby:CLM_3946"/>
<dbReference type="eggNOG" id="COG0089">
    <property type="taxonomic scope" value="Bacteria"/>
</dbReference>
<dbReference type="HOGENOM" id="CLU_037562_3_2_9"/>
<dbReference type="Proteomes" id="UP000001374">
    <property type="component" value="Chromosome"/>
</dbReference>
<dbReference type="GO" id="GO:1990904">
    <property type="term" value="C:ribonucleoprotein complex"/>
    <property type="evidence" value="ECO:0007669"/>
    <property type="project" value="UniProtKB-KW"/>
</dbReference>
<dbReference type="GO" id="GO:0005840">
    <property type="term" value="C:ribosome"/>
    <property type="evidence" value="ECO:0007669"/>
    <property type="project" value="UniProtKB-KW"/>
</dbReference>
<dbReference type="GO" id="GO:0019843">
    <property type="term" value="F:rRNA binding"/>
    <property type="evidence" value="ECO:0007669"/>
    <property type="project" value="UniProtKB-UniRule"/>
</dbReference>
<dbReference type="GO" id="GO:0003735">
    <property type="term" value="F:structural constituent of ribosome"/>
    <property type="evidence" value="ECO:0007669"/>
    <property type="project" value="InterPro"/>
</dbReference>
<dbReference type="GO" id="GO:0006412">
    <property type="term" value="P:translation"/>
    <property type="evidence" value="ECO:0007669"/>
    <property type="project" value="UniProtKB-UniRule"/>
</dbReference>
<dbReference type="FunFam" id="3.30.70.330:FF:000001">
    <property type="entry name" value="50S ribosomal protein L23"/>
    <property type="match status" value="1"/>
</dbReference>
<dbReference type="Gene3D" id="3.30.70.330">
    <property type="match status" value="1"/>
</dbReference>
<dbReference type="HAMAP" id="MF_01369_B">
    <property type="entry name" value="Ribosomal_uL23_B"/>
    <property type="match status" value="1"/>
</dbReference>
<dbReference type="InterPro" id="IPR012677">
    <property type="entry name" value="Nucleotide-bd_a/b_plait_sf"/>
</dbReference>
<dbReference type="InterPro" id="IPR013025">
    <property type="entry name" value="Ribosomal_uL23-like"/>
</dbReference>
<dbReference type="InterPro" id="IPR012678">
    <property type="entry name" value="Ribosomal_uL23/eL15/eS24_sf"/>
</dbReference>
<dbReference type="InterPro" id="IPR001014">
    <property type="entry name" value="Ribosomal_uL23_CS"/>
</dbReference>
<dbReference type="NCBIfam" id="NF004363">
    <property type="entry name" value="PRK05738.2-4"/>
    <property type="match status" value="1"/>
</dbReference>
<dbReference type="PANTHER" id="PTHR11620">
    <property type="entry name" value="60S RIBOSOMAL PROTEIN L23A"/>
    <property type="match status" value="1"/>
</dbReference>
<dbReference type="Pfam" id="PF00276">
    <property type="entry name" value="Ribosomal_L23"/>
    <property type="match status" value="1"/>
</dbReference>
<dbReference type="SUPFAM" id="SSF54189">
    <property type="entry name" value="Ribosomal proteins S24e, L23 and L15e"/>
    <property type="match status" value="1"/>
</dbReference>
<dbReference type="PROSITE" id="PS00050">
    <property type="entry name" value="RIBOSOMAL_L23"/>
    <property type="match status" value="1"/>
</dbReference>
<proteinExistence type="inferred from homology"/>
<sequence length="97" mass="11160">MKLTNYDIIRRPLITEKTMASMADKKYTFVVDIHANKSQIKNAIETIFDVKVEDVKTARIMGKTKRVGVHIGKRPDYKKAIVKLTEDSKTIEFFEGL</sequence>
<name>RL23_CLOBJ</name>
<protein>
    <recommendedName>
        <fullName evidence="1">Large ribosomal subunit protein uL23</fullName>
    </recommendedName>
    <alternativeName>
        <fullName evidence="2">50S ribosomal protein L23</fullName>
    </alternativeName>
</protein>